<comment type="function">
    <text evidence="2">Involved in the second step of GPI biosynthesis. De-N-acetylation of N-acetylglucosaminyl-phosphatidylinositol.</text>
</comment>
<comment type="catalytic activity">
    <reaction evidence="2">
        <text>a 6-(N-acetyl-alpha-D-glucosaminyl)-1-(1,2-diacyl-sn-glycero-3-phospho)-1D-myo-inositol + H2O = a 6-(alpha-D-glucosaminyl)-1-(1,2-diacyl-sn-glycero-3-phospho)-1D-myo-inositol + acetate</text>
        <dbReference type="Rhea" id="RHEA:11660"/>
        <dbReference type="ChEBI" id="CHEBI:15377"/>
        <dbReference type="ChEBI" id="CHEBI:30089"/>
        <dbReference type="ChEBI" id="CHEBI:57265"/>
        <dbReference type="ChEBI" id="CHEBI:57997"/>
        <dbReference type="EC" id="3.5.1.89"/>
    </reaction>
    <physiologicalReaction direction="left-to-right" evidence="5">
        <dbReference type="Rhea" id="RHEA:11661"/>
    </physiologicalReaction>
</comment>
<comment type="pathway">
    <text evidence="5">Glycolipid biosynthesis; glycosylphosphatidylinositol-anchor biosynthesis.</text>
</comment>
<comment type="subcellular location">
    <subcellularLocation>
        <location evidence="3">Endoplasmic reticulum membrane</location>
    </subcellularLocation>
</comment>
<comment type="similarity">
    <text evidence="4">Belongs to the PIGL family.</text>
</comment>
<comment type="sequence caution" evidence="4">
    <conflict type="frameshift">
        <sequence resource="EMBL" id="M59860"/>
    </conflict>
</comment>
<gene>
    <name type="primary">GPI12</name>
    <name type="ordered locus">YMR281W</name>
    <name type="ORF">YM8021.07</name>
</gene>
<name>GPI12_YEAST</name>
<organism>
    <name type="scientific">Saccharomyces cerevisiae (strain ATCC 204508 / S288c)</name>
    <name type="common">Baker's yeast</name>
    <dbReference type="NCBI Taxonomy" id="559292"/>
    <lineage>
        <taxon>Eukaryota</taxon>
        <taxon>Fungi</taxon>
        <taxon>Dikarya</taxon>
        <taxon>Ascomycota</taxon>
        <taxon>Saccharomycotina</taxon>
        <taxon>Saccharomycetes</taxon>
        <taxon>Saccharomycetales</taxon>
        <taxon>Saccharomycetaceae</taxon>
        <taxon>Saccharomyces</taxon>
    </lineage>
</organism>
<reference key="1">
    <citation type="journal article" date="1999" name="Biochem. J.">
        <title>Mammalian PIG-L and its yeast homologue Gpi12p are N-acetylglucosaminylphosphatidylinositol de-N-acetylases essential in glycosylphosphatidylinositol biosynthesis.</title>
        <authorList>
            <person name="Watanabe R."/>
            <person name="Ohishi K."/>
            <person name="Maeda Y."/>
            <person name="Nakamura N."/>
            <person name="Kinoshita T."/>
        </authorList>
    </citation>
    <scope>NUCLEOTIDE SEQUENCE [GENOMIC DNA]</scope>
    <scope>FUNCTION</scope>
    <scope>CATALYTIC ACTIVITY</scope>
</reference>
<reference key="2">
    <citation type="journal article" date="1991" name="Curr. Genet.">
        <title>Characterization of a yeast nuclear gene, AEP2, required for accumulation of mitochondrial mRNA encoding subunit 9 of the ATP synthase.</title>
        <authorList>
            <person name="Payne M.J."/>
            <person name="Finnegan P.M."/>
            <person name="Keramidaris E."/>
            <person name="Lukins H.B."/>
        </authorList>
    </citation>
    <scope>NUCLEOTIDE SEQUENCE [GENOMIC DNA]</scope>
</reference>
<reference key="3">
    <citation type="journal article" date="1997" name="Nature">
        <title>The nucleotide sequence of Saccharomyces cerevisiae chromosome XIII.</title>
        <authorList>
            <person name="Bowman S."/>
            <person name="Churcher C.M."/>
            <person name="Badcock K."/>
            <person name="Brown D."/>
            <person name="Chillingworth T."/>
            <person name="Connor R."/>
            <person name="Dedman K."/>
            <person name="Devlin K."/>
            <person name="Gentles S."/>
            <person name="Hamlin N."/>
            <person name="Hunt S."/>
            <person name="Jagels K."/>
            <person name="Lye G."/>
            <person name="Moule S."/>
            <person name="Odell C."/>
            <person name="Pearson D."/>
            <person name="Rajandream M.A."/>
            <person name="Rice P."/>
            <person name="Skelton J."/>
            <person name="Walsh S.V."/>
            <person name="Whitehead S."/>
            <person name="Barrell B.G."/>
        </authorList>
    </citation>
    <scope>NUCLEOTIDE SEQUENCE [LARGE SCALE GENOMIC DNA]</scope>
    <source>
        <strain>ATCC 204508 / S288c</strain>
    </source>
</reference>
<reference key="4">
    <citation type="journal article" date="2014" name="G3 (Bethesda)">
        <title>The reference genome sequence of Saccharomyces cerevisiae: Then and now.</title>
        <authorList>
            <person name="Engel S.R."/>
            <person name="Dietrich F.S."/>
            <person name="Fisk D.G."/>
            <person name="Binkley G."/>
            <person name="Balakrishnan R."/>
            <person name="Costanzo M.C."/>
            <person name="Dwight S.S."/>
            <person name="Hitz B.C."/>
            <person name="Karra K."/>
            <person name="Nash R.S."/>
            <person name="Weng S."/>
            <person name="Wong E.D."/>
            <person name="Lloyd P."/>
            <person name="Skrzypek M.S."/>
            <person name="Miyasato S.R."/>
            <person name="Simison M."/>
            <person name="Cherry J.M."/>
        </authorList>
    </citation>
    <scope>GENOME REANNOTATION</scope>
    <source>
        <strain>ATCC 204508 / S288c</strain>
    </source>
</reference>
<reference key="5">
    <citation type="journal article" date="2016" name="Nat. Methods">
        <title>One library to make them all: streamlining the creation of yeast libraries via a SWAp-Tag strategy.</title>
        <authorList>
            <person name="Yofe I."/>
            <person name="Weill U."/>
            <person name="Meurer M."/>
            <person name="Chuartzman S."/>
            <person name="Zalckvar E."/>
            <person name="Goldman O."/>
            <person name="Ben-Dor S."/>
            <person name="Schuetze C."/>
            <person name="Wiedemann N."/>
            <person name="Knop M."/>
            <person name="Khmelinskii A."/>
            <person name="Schuldiner M."/>
        </authorList>
    </citation>
    <scope>SUBCELLULAR LOCATION</scope>
</reference>
<proteinExistence type="evidence at protein level"/>
<dbReference type="EC" id="3.5.1.89" evidence="2"/>
<dbReference type="EMBL" id="AB017166">
    <property type="protein sequence ID" value="BAA74776.1"/>
    <property type="molecule type" value="Genomic_DNA"/>
</dbReference>
<dbReference type="EMBL" id="M59860">
    <property type="status" value="NOT_ANNOTATED_CDS"/>
    <property type="molecule type" value="Genomic_DNA"/>
</dbReference>
<dbReference type="EMBL" id="Z49704">
    <property type="protein sequence ID" value="CAA89779.1"/>
    <property type="molecule type" value="Genomic_DNA"/>
</dbReference>
<dbReference type="EMBL" id="BK006946">
    <property type="protein sequence ID" value="DAA10182.1"/>
    <property type="molecule type" value="Genomic_DNA"/>
</dbReference>
<dbReference type="PIR" id="S54588">
    <property type="entry name" value="S54588"/>
</dbReference>
<dbReference type="RefSeq" id="NP_014008.1">
    <property type="nucleotide sequence ID" value="NM_001182788.1"/>
</dbReference>
<dbReference type="SMR" id="P23797"/>
<dbReference type="BioGRID" id="35460">
    <property type="interactions" value="372"/>
</dbReference>
<dbReference type="FunCoup" id="P23797">
    <property type="interactions" value="619"/>
</dbReference>
<dbReference type="IntAct" id="P23797">
    <property type="interactions" value="1"/>
</dbReference>
<dbReference type="STRING" id="4932.YMR281W"/>
<dbReference type="iPTMnet" id="P23797"/>
<dbReference type="PaxDb" id="4932-YMR281W"/>
<dbReference type="PeptideAtlas" id="P23797"/>
<dbReference type="EnsemblFungi" id="YMR281W_mRNA">
    <property type="protein sequence ID" value="YMR281W"/>
    <property type="gene ID" value="YMR281W"/>
</dbReference>
<dbReference type="GeneID" id="855324"/>
<dbReference type="KEGG" id="sce:YMR281W"/>
<dbReference type="AGR" id="SGD:S000004894"/>
<dbReference type="SGD" id="S000004894">
    <property type="gene designation" value="GPI12"/>
</dbReference>
<dbReference type="VEuPathDB" id="FungiDB:YMR281W"/>
<dbReference type="eggNOG" id="KOG3332">
    <property type="taxonomic scope" value="Eukaryota"/>
</dbReference>
<dbReference type="GeneTree" id="ENSGT00390000018434"/>
<dbReference type="HOGENOM" id="CLU_034979_0_0_1"/>
<dbReference type="InParanoid" id="P23797"/>
<dbReference type="OMA" id="YVLESVN"/>
<dbReference type="OrthoDB" id="440160at2759"/>
<dbReference type="BioCyc" id="YEAST:YMR281W-MONOMER"/>
<dbReference type="Reactome" id="R-SCE-162710">
    <property type="pathway name" value="Synthesis of glycosylphosphatidylinositol (GPI)"/>
</dbReference>
<dbReference type="UniPathway" id="UPA00196"/>
<dbReference type="BioGRID-ORCS" id="855324">
    <property type="hits" value="1 hit in 10 CRISPR screens"/>
</dbReference>
<dbReference type="PRO" id="PR:P23797"/>
<dbReference type="Proteomes" id="UP000002311">
    <property type="component" value="Chromosome XIII"/>
</dbReference>
<dbReference type="RNAct" id="P23797">
    <property type="molecule type" value="protein"/>
</dbReference>
<dbReference type="GO" id="GO:0005737">
    <property type="term" value="C:cytoplasm"/>
    <property type="evidence" value="ECO:0007005"/>
    <property type="project" value="SGD"/>
</dbReference>
<dbReference type="GO" id="GO:0005783">
    <property type="term" value="C:endoplasmic reticulum"/>
    <property type="evidence" value="ECO:0007005"/>
    <property type="project" value="SGD"/>
</dbReference>
<dbReference type="GO" id="GO:0005789">
    <property type="term" value="C:endoplasmic reticulum membrane"/>
    <property type="evidence" value="ECO:0007669"/>
    <property type="project" value="UniProtKB-SubCell"/>
</dbReference>
<dbReference type="GO" id="GO:0000225">
    <property type="term" value="F:N-acetylglucosaminylphosphatidylinositol deacetylase activity"/>
    <property type="evidence" value="ECO:0000314"/>
    <property type="project" value="SGD"/>
</dbReference>
<dbReference type="GO" id="GO:0006506">
    <property type="term" value="P:GPI anchor biosynthetic process"/>
    <property type="evidence" value="ECO:0000250"/>
    <property type="project" value="SGD"/>
</dbReference>
<dbReference type="FunFam" id="3.40.50.10320:FF:000004">
    <property type="entry name" value="N-acetylglucosaminylphosphatidylinositol de-N-acetylase"/>
    <property type="match status" value="1"/>
</dbReference>
<dbReference type="Gene3D" id="3.40.50.10320">
    <property type="entry name" value="LmbE-like"/>
    <property type="match status" value="1"/>
</dbReference>
<dbReference type="InterPro" id="IPR003737">
    <property type="entry name" value="GlcNAc_PI_deacetylase-related"/>
</dbReference>
<dbReference type="InterPro" id="IPR024078">
    <property type="entry name" value="LmbE-like_dom_sf"/>
</dbReference>
<dbReference type="PANTHER" id="PTHR12993:SF11">
    <property type="entry name" value="N-ACETYLGLUCOSAMINYL-PHOSPHATIDYLINOSITOL DE-N-ACETYLASE"/>
    <property type="match status" value="1"/>
</dbReference>
<dbReference type="PANTHER" id="PTHR12993">
    <property type="entry name" value="N-ACETYLGLUCOSAMINYL-PHOSPHATIDYLINOSITOL DE-N-ACETYLASE-RELATED"/>
    <property type="match status" value="1"/>
</dbReference>
<dbReference type="Pfam" id="PF02585">
    <property type="entry name" value="PIG-L"/>
    <property type="match status" value="1"/>
</dbReference>
<dbReference type="SUPFAM" id="SSF102588">
    <property type="entry name" value="LmbE-like"/>
    <property type="match status" value="1"/>
</dbReference>
<protein>
    <recommendedName>
        <fullName>N-acetylglucosaminyl-phosphatidylinositol de-N-acetylase</fullName>
        <ecNumber evidence="2">3.5.1.89</ecNumber>
    </recommendedName>
</protein>
<keyword id="KW-0256">Endoplasmic reticulum</keyword>
<keyword id="KW-0337">GPI-anchor biosynthesis</keyword>
<keyword id="KW-0378">Hydrolase</keyword>
<keyword id="KW-0472">Membrane</keyword>
<keyword id="KW-1185">Reference proteome</keyword>
<keyword id="KW-0812">Transmembrane</keyword>
<keyword id="KW-1133">Transmembrane helix</keyword>
<evidence type="ECO:0000255" key="1"/>
<evidence type="ECO:0000269" key="2">
    <source>
    </source>
</evidence>
<evidence type="ECO:0000269" key="3">
    <source>
    </source>
</evidence>
<evidence type="ECO:0000305" key="4"/>
<evidence type="ECO:0000305" key="5">
    <source>
    </source>
</evidence>
<sequence length="304" mass="35446">MKMLRRTKVNFSKLLYKITKLAIVLTILYIYFTPKIVSRNNASLQHIFPHKYGDYEINLVIAHPDDEVMFFSPIISQLNSYFPRTVPFNIICLSKGNAEGLGETRVRELNESAALLLHNERAVSVQVMDFQDGMDEIWDIDSITSSLSQKIDIKNHNLNQIIVTFDSYGVSNHINHKSCYAAVKKLVDDYAQPKTKRNEQPPHVTALYLRSYKNNIVLKYNSFIWEILKILYDLISPFRRIIQALPPNTAAEKDKLSLMNTHAQYVLAFATMLNAHESQVVWFRYGWWIFSRFVFVNEFDVYTY</sequence>
<feature type="chain" id="PRO_0000207170" description="N-acetylglucosaminyl-phosphatidylinositol de-N-acetylase">
    <location>
        <begin position="1"/>
        <end position="304"/>
    </location>
</feature>
<feature type="topological domain" description="Lumenal" evidence="1">
    <location>
        <begin position="1"/>
        <end position="20"/>
    </location>
</feature>
<feature type="transmembrane region" description="Helical" evidence="1">
    <location>
        <begin position="21"/>
        <end position="38"/>
    </location>
</feature>
<feature type="topological domain" description="Cytoplasmic" evidence="1">
    <location>
        <begin position="39"/>
        <end position="304"/>
    </location>
</feature>
<accession>P23797</accession>
<accession>D6W0A8</accession>